<protein>
    <recommendedName>
        <fullName>L-selectin</fullName>
    </recommendedName>
    <alternativeName>
        <fullName>CD62 antigen-like family member L</fullName>
    </alternativeName>
    <alternativeName>
        <fullName>Leukocyte adhesion molecule 1</fullName>
        <shortName>LAM-1</shortName>
    </alternativeName>
    <alternativeName>
        <fullName>Leukocyte-endothelial cell adhesion molecule 1</fullName>
        <shortName>LECAM1</shortName>
    </alternativeName>
    <alternativeName>
        <fullName>Lymph node homing receptor</fullName>
    </alternativeName>
    <cdAntigenName>CD62L</cdAntigenName>
</protein>
<reference key="1">
    <citation type="submission" date="1996-11" db="EMBL/GenBank/DDBJ databases">
        <title>Cloning of the cDNA encoding L-selectin from nonhuman primates.</title>
        <authorList>
            <person name="Budman J.I."/>
            <person name="Fu H."/>
            <person name="Johnson C.E."/>
            <person name="Thakur A.B."/>
            <person name="Berg E.L."/>
            <person name="Tsurushita N."/>
        </authorList>
    </citation>
    <scope>NUCLEOTIDE SEQUENCE [MRNA]</scope>
</reference>
<accession>Q95235</accession>
<dbReference type="EMBL" id="U73729">
    <property type="protein sequence ID" value="AAB18247.1"/>
    <property type="molecule type" value="mRNA"/>
</dbReference>
<dbReference type="BMRB" id="Q95235"/>
<dbReference type="SMR" id="Q95235"/>
<dbReference type="GlyCosmos" id="Q95235">
    <property type="glycosylation" value="8 sites, No reported glycans"/>
</dbReference>
<dbReference type="GO" id="GO:0005886">
    <property type="term" value="C:plasma membrane"/>
    <property type="evidence" value="ECO:0000250"/>
    <property type="project" value="UniProtKB"/>
</dbReference>
<dbReference type="GO" id="GO:0005509">
    <property type="term" value="F:calcium ion binding"/>
    <property type="evidence" value="ECO:0000250"/>
    <property type="project" value="UniProtKB"/>
</dbReference>
<dbReference type="GO" id="GO:0070492">
    <property type="term" value="F:oligosaccharide binding"/>
    <property type="evidence" value="ECO:0000250"/>
    <property type="project" value="UniProtKB"/>
</dbReference>
<dbReference type="GO" id="GO:0016339">
    <property type="term" value="P:calcium-dependent cell-cell adhesion via plasma membrane cell adhesion molecules"/>
    <property type="evidence" value="ECO:0000250"/>
    <property type="project" value="UniProtKB"/>
</dbReference>
<dbReference type="GO" id="GO:0050901">
    <property type="term" value="P:leukocyte tethering or rolling"/>
    <property type="evidence" value="ECO:0000250"/>
    <property type="project" value="UniProtKB"/>
</dbReference>
<dbReference type="CDD" id="cd00033">
    <property type="entry name" value="CCP"/>
    <property type="match status" value="2"/>
</dbReference>
<dbReference type="CDD" id="cd03592">
    <property type="entry name" value="CLECT_selectins_like"/>
    <property type="match status" value="1"/>
</dbReference>
<dbReference type="CDD" id="cd00054">
    <property type="entry name" value="EGF_CA"/>
    <property type="match status" value="1"/>
</dbReference>
<dbReference type="FunFam" id="3.10.100.10:FF:000007">
    <property type="entry name" value="L-selectin"/>
    <property type="match status" value="1"/>
</dbReference>
<dbReference type="FunFam" id="2.10.25.10:FF:000176">
    <property type="entry name" value="Selectin P"/>
    <property type="match status" value="1"/>
</dbReference>
<dbReference type="FunFam" id="2.10.70.10:FF:000001">
    <property type="entry name" value="Selectin P"/>
    <property type="match status" value="2"/>
</dbReference>
<dbReference type="Gene3D" id="2.10.70.10">
    <property type="entry name" value="Complement Module, domain 1"/>
    <property type="match status" value="2"/>
</dbReference>
<dbReference type="Gene3D" id="2.10.25.10">
    <property type="entry name" value="Laminin"/>
    <property type="match status" value="1"/>
</dbReference>
<dbReference type="Gene3D" id="3.10.100.10">
    <property type="entry name" value="Mannose-Binding Protein A, subunit A"/>
    <property type="match status" value="1"/>
</dbReference>
<dbReference type="InterPro" id="IPR001304">
    <property type="entry name" value="C-type_lectin-like"/>
</dbReference>
<dbReference type="InterPro" id="IPR016186">
    <property type="entry name" value="C-type_lectin-like/link_sf"/>
</dbReference>
<dbReference type="InterPro" id="IPR018378">
    <property type="entry name" value="C-type_lectin_CS"/>
</dbReference>
<dbReference type="InterPro" id="IPR050350">
    <property type="entry name" value="Compl-Cell_Adhes-Reg"/>
</dbReference>
<dbReference type="InterPro" id="IPR016187">
    <property type="entry name" value="CTDL_fold"/>
</dbReference>
<dbReference type="InterPro" id="IPR000742">
    <property type="entry name" value="EGF-like_dom"/>
</dbReference>
<dbReference type="InterPro" id="IPR016348">
    <property type="entry name" value="L-selectin"/>
</dbReference>
<dbReference type="InterPro" id="IPR033991">
    <property type="entry name" value="Selectin_CTLD"/>
</dbReference>
<dbReference type="InterPro" id="IPR002396">
    <property type="entry name" value="Selectin_superfamily"/>
</dbReference>
<dbReference type="InterPro" id="IPR035976">
    <property type="entry name" value="Sushi/SCR/CCP_sf"/>
</dbReference>
<dbReference type="InterPro" id="IPR000436">
    <property type="entry name" value="Sushi_SCR_CCP_dom"/>
</dbReference>
<dbReference type="PANTHER" id="PTHR19325">
    <property type="entry name" value="COMPLEMENT COMPONENT-RELATED SUSHI DOMAIN-CONTAINING"/>
    <property type="match status" value="1"/>
</dbReference>
<dbReference type="PANTHER" id="PTHR19325:SF543">
    <property type="entry name" value="L-SELECTIN"/>
    <property type="match status" value="1"/>
</dbReference>
<dbReference type="Pfam" id="PF00008">
    <property type="entry name" value="EGF"/>
    <property type="match status" value="1"/>
</dbReference>
<dbReference type="Pfam" id="PF00059">
    <property type="entry name" value="Lectin_C"/>
    <property type="match status" value="1"/>
</dbReference>
<dbReference type="Pfam" id="PF00084">
    <property type="entry name" value="Sushi"/>
    <property type="match status" value="2"/>
</dbReference>
<dbReference type="PIRSF" id="PIRSF002421">
    <property type="entry name" value="L-selectin"/>
    <property type="match status" value="1"/>
</dbReference>
<dbReference type="PRINTS" id="PR00343">
    <property type="entry name" value="SELECTIN"/>
</dbReference>
<dbReference type="SMART" id="SM00032">
    <property type="entry name" value="CCP"/>
    <property type="match status" value="2"/>
</dbReference>
<dbReference type="SMART" id="SM00034">
    <property type="entry name" value="CLECT"/>
    <property type="match status" value="1"/>
</dbReference>
<dbReference type="SMART" id="SM00181">
    <property type="entry name" value="EGF"/>
    <property type="match status" value="1"/>
</dbReference>
<dbReference type="SUPFAM" id="SSF56436">
    <property type="entry name" value="C-type lectin-like"/>
    <property type="match status" value="1"/>
</dbReference>
<dbReference type="SUPFAM" id="SSF57535">
    <property type="entry name" value="Complement control module/SCR domain"/>
    <property type="match status" value="2"/>
</dbReference>
<dbReference type="SUPFAM" id="SSF57196">
    <property type="entry name" value="EGF/Laminin"/>
    <property type="match status" value="1"/>
</dbReference>
<dbReference type="PROSITE" id="PS00615">
    <property type="entry name" value="C_TYPE_LECTIN_1"/>
    <property type="match status" value="1"/>
</dbReference>
<dbReference type="PROSITE" id="PS50041">
    <property type="entry name" value="C_TYPE_LECTIN_2"/>
    <property type="match status" value="1"/>
</dbReference>
<dbReference type="PROSITE" id="PS00022">
    <property type="entry name" value="EGF_1"/>
    <property type="match status" value="1"/>
</dbReference>
<dbReference type="PROSITE" id="PS01186">
    <property type="entry name" value="EGF_2"/>
    <property type="match status" value="1"/>
</dbReference>
<dbReference type="PROSITE" id="PS50026">
    <property type="entry name" value="EGF_3"/>
    <property type="match status" value="1"/>
</dbReference>
<dbReference type="PROSITE" id="PS50923">
    <property type="entry name" value="SUSHI"/>
    <property type="match status" value="2"/>
</dbReference>
<comment type="function">
    <text evidence="2">Calcium-dependent lectin that mediates cell adhesion by binding to glycoproteins on neighboring cells. Mediates the adherence of lymphocytes to endothelial cells of high endothelial venules in peripheral lymph nodes. Promotes initial tethering and rolling of leukocytes in endothelia.</text>
</comment>
<comment type="subunit">
    <text evidence="2">Interaction with SELPLG/PSGL1 and PODXL2 is required for promoting recruitment and rolling of leukocytes. This interaction is dependent on the sialyl Lewis X glycan modification of SELPLG and PODXL2, and tyrosine sulfation modifications of SELPLG. Sulfation on 'Tyr-51' of SELPLG is important for L-selectin binding.</text>
</comment>
<comment type="subcellular location">
    <subcellularLocation>
        <location evidence="2">Cell membrane</location>
        <topology evidence="2">Single-pass type I membrane protein</topology>
    </subcellularLocation>
</comment>
<comment type="PTM">
    <text evidence="2">N-glycosylated.</text>
</comment>
<comment type="similarity">
    <text evidence="7">Belongs to the selectin/LECAM family.</text>
</comment>
<proteinExistence type="evidence at transcript level"/>
<sequence length="372" mass="42118">MIFPWKCQSTQRDLCNIFKLWGWTMLCCDFLAHHGTDCWTYHYSEKPMNWQRARRFCRENYTDLVAIQNKAEIEYLEKTLPFSRSYYWIGIRKIGGIWTWVGTNKSLTEEAENWGDGEPNNKKNKEDCVEIYIKRNKDAGKWNDDACHKLKAALCYTASCQPWSCSGHGECVEIINNYTCNCDVGYYGPQCQFVIQCEPLEAPELGTMDCTHPLGNFSFSSQCAFNCSEGTNLTGIEETTCGPFGNWSSPEPTCQVIQCEPLSAPDLGIMNCSHPLASFSFTSACTFICSEGTELIGKKKTICESSGIWSNPSPICQKLDKSFSMIKEGDYNPLFIPVAVMVTAFSGLAFIIWLARRLKKGKKSKKSMDDPY</sequence>
<keyword id="KW-0106">Calcium</keyword>
<keyword id="KW-0130">Cell adhesion</keyword>
<keyword id="KW-1003">Cell membrane</keyword>
<keyword id="KW-1015">Disulfide bond</keyword>
<keyword id="KW-0245">EGF-like domain</keyword>
<keyword id="KW-0325">Glycoprotein</keyword>
<keyword id="KW-0430">Lectin</keyword>
<keyword id="KW-0472">Membrane</keyword>
<keyword id="KW-0479">Metal-binding</keyword>
<keyword id="KW-0677">Repeat</keyword>
<keyword id="KW-0732">Signal</keyword>
<keyword id="KW-0768">Sushi</keyword>
<keyword id="KW-0812">Transmembrane</keyword>
<keyword id="KW-1133">Transmembrane helix</keyword>
<feature type="signal peptide" evidence="1">
    <location>
        <begin position="1"/>
        <end position="28"/>
    </location>
</feature>
<feature type="propeptide" id="PRO_0000017485" evidence="1">
    <location>
        <begin position="29"/>
        <end position="38"/>
    </location>
</feature>
<feature type="chain" id="PRO_0000017486" description="L-selectin">
    <location>
        <begin position="39"/>
        <end position="372"/>
    </location>
</feature>
<feature type="topological domain" description="Extracellular" evidence="3">
    <location>
        <begin position="39"/>
        <end position="332"/>
    </location>
</feature>
<feature type="transmembrane region" description="Helical" evidence="3">
    <location>
        <begin position="333"/>
        <end position="355"/>
    </location>
</feature>
<feature type="topological domain" description="Cytoplasmic" evidence="3">
    <location>
        <begin position="356"/>
        <end position="372"/>
    </location>
</feature>
<feature type="domain" description="C-type lectin" evidence="4">
    <location>
        <begin position="55"/>
        <end position="155"/>
    </location>
</feature>
<feature type="domain" description="EGF-like" evidence="5">
    <location>
        <begin position="156"/>
        <end position="192"/>
    </location>
</feature>
<feature type="domain" description="Sushi 1" evidence="6">
    <location>
        <begin position="195"/>
        <end position="256"/>
    </location>
</feature>
<feature type="domain" description="Sushi 2" evidence="6">
    <location>
        <begin position="257"/>
        <end position="318"/>
    </location>
</feature>
<feature type="binding site" evidence="2">
    <location>
        <position position="118"/>
    </location>
    <ligand>
        <name>Ca(2+)</name>
        <dbReference type="ChEBI" id="CHEBI:29108"/>
    </ligand>
</feature>
<feature type="binding site" evidence="2">
    <location>
        <position position="120"/>
    </location>
    <ligand>
        <name>Ca(2+)</name>
        <dbReference type="ChEBI" id="CHEBI:29108"/>
    </ligand>
</feature>
<feature type="binding site" evidence="2">
    <location>
        <position position="126"/>
    </location>
    <ligand>
        <name>Ca(2+)</name>
        <dbReference type="ChEBI" id="CHEBI:29108"/>
    </ligand>
</feature>
<feature type="binding site" evidence="2">
    <location>
        <position position="143"/>
    </location>
    <ligand>
        <name>Ca(2+)</name>
        <dbReference type="ChEBI" id="CHEBI:29108"/>
    </ligand>
</feature>
<feature type="binding site" evidence="2">
    <location>
        <position position="144"/>
    </location>
    <ligand>
        <name>Ca(2+)</name>
        <dbReference type="ChEBI" id="CHEBI:29108"/>
    </ligand>
</feature>
<feature type="glycosylation site" description="N-linked (GlcNAc...) asparagine" evidence="3">
    <location>
        <position position="60"/>
    </location>
</feature>
<feature type="glycosylation site" description="N-linked (GlcNAc...) asparagine" evidence="3">
    <location>
        <position position="104"/>
    </location>
</feature>
<feature type="glycosylation site" description="N-linked (GlcNAc...) asparagine" evidence="3">
    <location>
        <position position="177"/>
    </location>
</feature>
<feature type="glycosylation site" description="N-linked (GlcNAc...) asparagine" evidence="3">
    <location>
        <position position="216"/>
    </location>
</feature>
<feature type="glycosylation site" description="N-linked (GlcNAc...) asparagine" evidence="3">
    <location>
        <position position="226"/>
    </location>
</feature>
<feature type="glycosylation site" description="N-linked (GlcNAc...) asparagine" evidence="3">
    <location>
        <position position="232"/>
    </location>
</feature>
<feature type="glycosylation site" description="N-linked (GlcNAc...) asparagine" evidence="3">
    <location>
        <position position="246"/>
    </location>
</feature>
<feature type="glycosylation site" description="N-linked (GlcNAc...) asparagine" evidence="3">
    <location>
        <position position="271"/>
    </location>
</feature>
<feature type="disulfide bond" evidence="2">
    <location>
        <begin position="57"/>
        <end position="155"/>
    </location>
</feature>
<feature type="disulfide bond" evidence="2">
    <location>
        <begin position="128"/>
        <end position="160"/>
    </location>
</feature>
<feature type="disulfide bond" evidence="2">
    <location>
        <begin position="128"/>
        <end position="147"/>
    </location>
</feature>
<feature type="disulfide bond" evidence="2">
    <location>
        <begin position="160"/>
        <end position="171"/>
    </location>
</feature>
<feature type="disulfide bond" evidence="1">
    <location>
        <begin position="165"/>
        <end position="180"/>
    </location>
</feature>
<feature type="disulfide bond" evidence="2">
    <location>
        <begin position="182"/>
        <end position="191"/>
    </location>
</feature>
<feature type="disulfide bond" evidence="1">
    <location>
        <begin position="197"/>
        <end position="241"/>
    </location>
</feature>
<feature type="disulfide bond" evidence="1">
    <location>
        <begin position="227"/>
        <end position="254"/>
    </location>
</feature>
<feature type="disulfide bond" evidence="1">
    <location>
        <begin position="259"/>
        <end position="303"/>
    </location>
</feature>
<feature type="disulfide bond" evidence="1">
    <location>
        <begin position="289"/>
        <end position="316"/>
    </location>
</feature>
<gene>
    <name type="primary">SELL</name>
</gene>
<evidence type="ECO:0000250" key="1"/>
<evidence type="ECO:0000250" key="2">
    <source>
        <dbReference type="UniProtKB" id="P14151"/>
    </source>
</evidence>
<evidence type="ECO:0000255" key="3"/>
<evidence type="ECO:0000255" key="4">
    <source>
        <dbReference type="PROSITE-ProRule" id="PRU00040"/>
    </source>
</evidence>
<evidence type="ECO:0000255" key="5">
    <source>
        <dbReference type="PROSITE-ProRule" id="PRU00076"/>
    </source>
</evidence>
<evidence type="ECO:0000255" key="6">
    <source>
        <dbReference type="PROSITE-ProRule" id="PRU00302"/>
    </source>
</evidence>
<evidence type="ECO:0000305" key="7"/>
<organism>
    <name type="scientific">Pongo pygmaeus</name>
    <name type="common">Bornean orangutan</name>
    <dbReference type="NCBI Taxonomy" id="9600"/>
    <lineage>
        <taxon>Eukaryota</taxon>
        <taxon>Metazoa</taxon>
        <taxon>Chordata</taxon>
        <taxon>Craniata</taxon>
        <taxon>Vertebrata</taxon>
        <taxon>Euteleostomi</taxon>
        <taxon>Mammalia</taxon>
        <taxon>Eutheria</taxon>
        <taxon>Euarchontoglires</taxon>
        <taxon>Primates</taxon>
        <taxon>Haplorrhini</taxon>
        <taxon>Catarrhini</taxon>
        <taxon>Hominidae</taxon>
        <taxon>Pongo</taxon>
    </lineage>
</organism>
<name>LYAM1_PONPY</name>